<comment type="function">
    <text evidence="1">Component of the cytochrome b6-f complex, which mediates electron transfer between photosystem II (PSII) and photosystem I (PSI), cyclic electron flow around PSI, and state transitions. PetL is important for photoautotrophic growth as well as for electron transfer efficiency and stability of the cytochrome b6-f complex.</text>
</comment>
<comment type="subunit">
    <text evidence="1">The 4 large subunits of the cytochrome b6-f complex are cytochrome b6, subunit IV (17 kDa polypeptide, PetD), cytochrome f and the Rieske protein, while the 4 small subunits are PetG, PetL, PetM and PetN. The complex functions as a dimer.</text>
</comment>
<comment type="subcellular location">
    <subcellularLocation>
        <location evidence="1">Plastid</location>
        <location evidence="1">Chloroplast thylakoid membrane</location>
        <topology evidence="1">Single-pass membrane protein</topology>
    </subcellularLocation>
</comment>
<comment type="similarity">
    <text evidence="1">Belongs to the PetL family.</text>
</comment>
<geneLocation type="chloroplast"/>
<keyword id="KW-0150">Chloroplast</keyword>
<keyword id="KW-0249">Electron transport</keyword>
<keyword id="KW-0472">Membrane</keyword>
<keyword id="KW-0602">Photosynthesis</keyword>
<keyword id="KW-0934">Plastid</keyword>
<keyword id="KW-1185">Reference proteome</keyword>
<keyword id="KW-0793">Thylakoid</keyword>
<keyword id="KW-0812">Transmembrane</keyword>
<keyword id="KW-1133">Transmembrane helix</keyword>
<keyword id="KW-0813">Transport</keyword>
<accession>P19445</accession>
<reference key="1">
    <citation type="journal article" date="1989" name="Proc. Natl. Acad. Sci. U.S.A.">
        <title>A 4-kDa maize chloroplast polypeptide associated with the cytochrome b6-f complex: subunit 5, encoded by the chloroplast petE gene.</title>
        <authorList>
            <person name="Haley J."/>
            <person name="Bogorad L."/>
        </authorList>
    </citation>
    <scope>NUCLEOTIDE SEQUENCE [GENOMIC DNA]</scope>
    <source>
        <strain>cv. FR9cms X FR37</strain>
    </source>
</reference>
<reference key="2">
    <citation type="journal article" date="1995" name="J. Mol. Biol.">
        <title>Complete sequence of the maize chloroplast genome: gene content, hotspots of divergence and fine tuning of genetic information by transcript editing.</title>
        <authorList>
            <person name="Maier R.M."/>
            <person name="Neckermann K."/>
            <person name="Igloi G.L."/>
            <person name="Koessel H."/>
        </authorList>
    </citation>
    <scope>NUCLEOTIDE SEQUENCE [LARGE SCALE GENOMIC DNA]</scope>
    <source>
        <strain>cv. B73</strain>
    </source>
</reference>
<organism>
    <name type="scientific">Zea mays</name>
    <name type="common">Maize</name>
    <dbReference type="NCBI Taxonomy" id="4577"/>
    <lineage>
        <taxon>Eukaryota</taxon>
        <taxon>Viridiplantae</taxon>
        <taxon>Streptophyta</taxon>
        <taxon>Embryophyta</taxon>
        <taxon>Tracheophyta</taxon>
        <taxon>Spermatophyta</taxon>
        <taxon>Magnoliopsida</taxon>
        <taxon>Liliopsida</taxon>
        <taxon>Poales</taxon>
        <taxon>Poaceae</taxon>
        <taxon>PACMAD clade</taxon>
        <taxon>Panicoideae</taxon>
        <taxon>Andropogonodae</taxon>
        <taxon>Andropogoneae</taxon>
        <taxon>Tripsacinae</taxon>
        <taxon>Zea</taxon>
    </lineage>
</organism>
<gene>
    <name evidence="1" type="primary">petL</name>
</gene>
<proteinExistence type="inferred from homology"/>
<sequence>MLTITSYFGFLLAALTITPALFISLNKIRLI</sequence>
<name>PETL_MAIZE</name>
<protein>
    <recommendedName>
        <fullName evidence="1">Cytochrome b6-f complex subunit 6</fullName>
    </recommendedName>
    <alternativeName>
        <fullName evidence="1">Cytochrome b6-f complex subunit PetL</fullName>
    </alternativeName>
    <alternativeName>
        <fullName evidence="1">Cytochrome b6-f complex subunit VI</fullName>
    </alternativeName>
</protein>
<evidence type="ECO:0000255" key="1">
    <source>
        <dbReference type="HAMAP-Rule" id="MF_00433"/>
    </source>
</evidence>
<dbReference type="EMBL" id="J04502">
    <property type="protein sequence ID" value="AAA84479.1"/>
    <property type="molecule type" value="Genomic_DNA"/>
</dbReference>
<dbReference type="EMBL" id="X86563">
    <property type="protein sequence ID" value="CAA60303.1"/>
    <property type="molecule type" value="Genomic_DNA"/>
</dbReference>
<dbReference type="PIR" id="S58569">
    <property type="entry name" value="S58569"/>
</dbReference>
<dbReference type="RefSeq" id="NP_043042.1">
    <property type="nucleotide sequence ID" value="NC_001666.2"/>
</dbReference>
<dbReference type="SMR" id="P19445"/>
<dbReference type="STRING" id="4577.P19445"/>
<dbReference type="GeneID" id="1466363"/>
<dbReference type="KEGG" id="zma:1466363"/>
<dbReference type="MaizeGDB" id="69195"/>
<dbReference type="InParanoid" id="P19445"/>
<dbReference type="OrthoDB" id="622343at2759"/>
<dbReference type="Proteomes" id="UP000007305">
    <property type="component" value="Chloroplast"/>
</dbReference>
<dbReference type="GO" id="GO:0009535">
    <property type="term" value="C:chloroplast thylakoid membrane"/>
    <property type="evidence" value="ECO:0007669"/>
    <property type="project" value="UniProtKB-SubCell"/>
</dbReference>
<dbReference type="GO" id="GO:0009512">
    <property type="term" value="C:cytochrome b6f complex"/>
    <property type="evidence" value="ECO:0007669"/>
    <property type="project" value="InterPro"/>
</dbReference>
<dbReference type="GO" id="GO:0045158">
    <property type="term" value="F:electron transporter, transferring electrons within cytochrome b6/f complex of photosystem II activity"/>
    <property type="evidence" value="ECO:0007669"/>
    <property type="project" value="UniProtKB-UniRule"/>
</dbReference>
<dbReference type="GO" id="GO:0015979">
    <property type="term" value="P:photosynthesis"/>
    <property type="evidence" value="ECO:0007669"/>
    <property type="project" value="UniProtKB-KW"/>
</dbReference>
<dbReference type="HAMAP" id="MF_00433">
    <property type="entry name" value="Cytb6_f_PetL"/>
    <property type="match status" value="1"/>
</dbReference>
<dbReference type="InterPro" id="IPR007802">
    <property type="entry name" value="Cyt_b6/f_cplx_su6"/>
</dbReference>
<dbReference type="PANTHER" id="PTHR37266">
    <property type="entry name" value="CYTOCHROME B6-F COMPLEX SUBUNIT 6"/>
    <property type="match status" value="1"/>
</dbReference>
<dbReference type="PANTHER" id="PTHR37266:SF1">
    <property type="entry name" value="CYTOCHROME B6-F COMPLEX SUBUNIT 6"/>
    <property type="match status" value="1"/>
</dbReference>
<dbReference type="Pfam" id="PF05115">
    <property type="entry name" value="PetL"/>
    <property type="match status" value="1"/>
</dbReference>
<dbReference type="SUPFAM" id="SSF103436">
    <property type="entry name" value="PetL subunit of the cytochrome b6f complex"/>
    <property type="match status" value="1"/>
</dbReference>
<feature type="chain" id="PRO_0000220456" description="Cytochrome b6-f complex subunit 6">
    <location>
        <begin position="1"/>
        <end position="31"/>
    </location>
</feature>
<feature type="transmembrane region" description="Helical" evidence="1">
    <location>
        <begin position="3"/>
        <end position="23"/>
    </location>
</feature>